<dbReference type="EMBL" id="AK220532">
    <property type="protein sequence ID" value="BAD90311.1"/>
    <property type="status" value="ALT_INIT"/>
    <property type="molecule type" value="mRNA"/>
</dbReference>
<dbReference type="EMBL" id="AK086367">
    <property type="protein sequence ID" value="BAC39655.1"/>
    <property type="status" value="ALT_FRAME"/>
    <property type="molecule type" value="mRNA"/>
</dbReference>
<dbReference type="EMBL" id="BC118967">
    <property type="protein sequence ID" value="AAI18968.1"/>
    <property type="molecule type" value="mRNA"/>
</dbReference>
<dbReference type="CCDS" id="CCDS40739.1">
    <molecule id="Q5DTI8-1"/>
</dbReference>
<dbReference type="RefSeq" id="NP_808443.2">
    <molecule id="Q5DTI8-1"/>
    <property type="nucleotide sequence ID" value="NM_177775.3"/>
</dbReference>
<dbReference type="RefSeq" id="XP_006511284.1">
    <molecule id="Q5DTI8-1"/>
    <property type="nucleotide sequence ID" value="XM_006511221.5"/>
</dbReference>
<dbReference type="SMR" id="Q5DTI8"/>
<dbReference type="BioGRID" id="234879">
    <property type="interactions" value="1"/>
</dbReference>
<dbReference type="FunCoup" id="Q5DTI8">
    <property type="interactions" value="229"/>
</dbReference>
<dbReference type="IntAct" id="Q5DTI8">
    <property type="interactions" value="1"/>
</dbReference>
<dbReference type="STRING" id="10090.ENSMUSP00000038757"/>
<dbReference type="iPTMnet" id="Q5DTI8"/>
<dbReference type="PhosphoSitePlus" id="Q5DTI8"/>
<dbReference type="PaxDb" id="10090-ENSMUSP00000038757"/>
<dbReference type="ProteomicsDB" id="267659">
    <molecule id="Q5DTI8-1"/>
</dbReference>
<dbReference type="ProteomicsDB" id="267660">
    <molecule id="Q5DTI8-2"/>
</dbReference>
<dbReference type="Antibodypedia" id="33435">
    <property type="antibodies" value="58 antibodies from 14 providers"/>
</dbReference>
<dbReference type="DNASU" id="272636"/>
<dbReference type="Ensembl" id="ENSMUST00000042158.13">
    <molecule id="Q5DTI8-1"/>
    <property type="protein sequence ID" value="ENSMUSP00000038757.7"/>
    <property type="gene ID" value="ENSMUSG00000037681.14"/>
</dbReference>
<dbReference type="GeneID" id="272636"/>
<dbReference type="KEGG" id="mmu:272636"/>
<dbReference type="UCSC" id="uc009reb.1">
    <molecule id="Q5DTI8-1"/>
    <property type="organism name" value="mouse"/>
</dbReference>
<dbReference type="AGR" id="MGI:1098699"/>
<dbReference type="CTD" id="83850"/>
<dbReference type="MGI" id="MGI:1098699">
    <property type="gene designation" value="Esyt3"/>
</dbReference>
<dbReference type="VEuPathDB" id="HostDB:ENSMUSG00000037681"/>
<dbReference type="eggNOG" id="KOG1012">
    <property type="taxonomic scope" value="Eukaryota"/>
</dbReference>
<dbReference type="GeneTree" id="ENSGT00940000161072"/>
<dbReference type="HOGENOM" id="CLU_012047_1_0_1"/>
<dbReference type="InParanoid" id="Q5DTI8"/>
<dbReference type="OMA" id="WANKVIS"/>
<dbReference type="OrthoDB" id="1029639at2759"/>
<dbReference type="PhylomeDB" id="Q5DTI8"/>
<dbReference type="TreeFam" id="TF324255"/>
<dbReference type="Reactome" id="R-MMU-9845576">
    <property type="pathway name" value="Glycosphingolipid transport"/>
</dbReference>
<dbReference type="BioGRID-ORCS" id="272636">
    <property type="hits" value="1 hit in 78 CRISPR screens"/>
</dbReference>
<dbReference type="ChiTaRS" id="Esyt3">
    <property type="organism name" value="mouse"/>
</dbReference>
<dbReference type="PRO" id="PR:Q5DTI8"/>
<dbReference type="Proteomes" id="UP000000589">
    <property type="component" value="Chromosome 9"/>
</dbReference>
<dbReference type="RNAct" id="Q5DTI8">
    <property type="molecule type" value="protein"/>
</dbReference>
<dbReference type="Bgee" id="ENSMUSG00000037681">
    <property type="expression patterns" value="Expressed in arcuate nucleus of hypothalamus and 131 other cell types or tissues"/>
</dbReference>
<dbReference type="ExpressionAtlas" id="Q5DTI8">
    <property type="expression patterns" value="baseline and differential"/>
</dbReference>
<dbReference type="GO" id="GO:0009898">
    <property type="term" value="C:cytoplasmic side of plasma membrane"/>
    <property type="evidence" value="ECO:0007669"/>
    <property type="project" value="Ensembl"/>
</dbReference>
<dbReference type="GO" id="GO:0005789">
    <property type="term" value="C:endoplasmic reticulum membrane"/>
    <property type="evidence" value="ECO:0007669"/>
    <property type="project" value="UniProtKB-SubCell"/>
</dbReference>
<dbReference type="GO" id="GO:0140268">
    <property type="term" value="C:endoplasmic reticulum-plasma membrane contact site"/>
    <property type="evidence" value="ECO:0000250"/>
    <property type="project" value="UniProtKB"/>
</dbReference>
<dbReference type="GO" id="GO:0008289">
    <property type="term" value="F:lipid binding"/>
    <property type="evidence" value="ECO:0007669"/>
    <property type="project" value="UniProtKB-KW"/>
</dbReference>
<dbReference type="GO" id="GO:0046872">
    <property type="term" value="F:metal ion binding"/>
    <property type="evidence" value="ECO:0007669"/>
    <property type="project" value="UniProtKB-KW"/>
</dbReference>
<dbReference type="GO" id="GO:0061817">
    <property type="term" value="P:endoplasmic reticulum-plasma membrane tethering"/>
    <property type="evidence" value="ECO:0007669"/>
    <property type="project" value="InterPro"/>
</dbReference>
<dbReference type="GO" id="GO:0006869">
    <property type="term" value="P:lipid transport"/>
    <property type="evidence" value="ECO:0007669"/>
    <property type="project" value="UniProtKB-KW"/>
</dbReference>
<dbReference type="CDD" id="cd08391">
    <property type="entry name" value="C2A_C2C_Synaptotagmin_like"/>
    <property type="match status" value="1"/>
</dbReference>
<dbReference type="CDD" id="cd04050">
    <property type="entry name" value="C2B_Synaptotagmin-like"/>
    <property type="match status" value="1"/>
</dbReference>
<dbReference type="CDD" id="cd04030">
    <property type="entry name" value="C2C_KIAA1228"/>
    <property type="match status" value="1"/>
</dbReference>
<dbReference type="FunFam" id="2.60.40.150:FF:000025">
    <property type="entry name" value="Extended synaptotagmin 2"/>
    <property type="match status" value="1"/>
</dbReference>
<dbReference type="FunFam" id="2.60.40.150:FF:000093">
    <property type="entry name" value="Extended synaptotagmin 3"/>
    <property type="match status" value="1"/>
</dbReference>
<dbReference type="FunFam" id="2.60.40.150:FF:000114">
    <property type="entry name" value="Extended synaptotagmin 3"/>
    <property type="match status" value="1"/>
</dbReference>
<dbReference type="Gene3D" id="2.60.40.150">
    <property type="entry name" value="C2 domain"/>
    <property type="match status" value="3"/>
</dbReference>
<dbReference type="InterPro" id="IPR000008">
    <property type="entry name" value="C2_dom"/>
</dbReference>
<dbReference type="InterPro" id="IPR035892">
    <property type="entry name" value="C2_domain_sf"/>
</dbReference>
<dbReference type="InterPro" id="IPR037752">
    <property type="entry name" value="C2C_KIAA1228"/>
</dbReference>
<dbReference type="InterPro" id="IPR037733">
    <property type="entry name" value="Ext_Synaptotagmin_C2A"/>
</dbReference>
<dbReference type="InterPro" id="IPR037749">
    <property type="entry name" value="Ext_Synaptotagmin_C2B"/>
</dbReference>
<dbReference type="InterPro" id="IPR051634">
    <property type="entry name" value="Extended_Synaptotagmin"/>
</dbReference>
<dbReference type="InterPro" id="IPR031468">
    <property type="entry name" value="SMP_LBD"/>
</dbReference>
<dbReference type="InterPro" id="IPR039010">
    <property type="entry name" value="Synaptotagmin_SMP"/>
</dbReference>
<dbReference type="PANTHER" id="PTHR45761:SF4">
    <property type="entry name" value="EXTENDED SYNAPTOTAGMIN-3"/>
    <property type="match status" value="1"/>
</dbReference>
<dbReference type="PANTHER" id="PTHR45761">
    <property type="entry name" value="EXTENDED SYNAPTOTAGMIN-LIKE PROTEIN 2, ISOFORM C"/>
    <property type="match status" value="1"/>
</dbReference>
<dbReference type="Pfam" id="PF00168">
    <property type="entry name" value="C2"/>
    <property type="match status" value="3"/>
</dbReference>
<dbReference type="Pfam" id="PF17047">
    <property type="entry name" value="SMP_LBD"/>
    <property type="match status" value="1"/>
</dbReference>
<dbReference type="PRINTS" id="PR00360">
    <property type="entry name" value="C2DOMAIN"/>
</dbReference>
<dbReference type="SMART" id="SM00239">
    <property type="entry name" value="C2"/>
    <property type="match status" value="3"/>
</dbReference>
<dbReference type="SUPFAM" id="SSF49562">
    <property type="entry name" value="C2 domain (Calcium/lipid-binding domain, CaLB)"/>
    <property type="match status" value="3"/>
</dbReference>
<dbReference type="PROSITE" id="PS50004">
    <property type="entry name" value="C2"/>
    <property type="match status" value="3"/>
</dbReference>
<dbReference type="PROSITE" id="PS51847">
    <property type="entry name" value="SMP"/>
    <property type="match status" value="1"/>
</dbReference>
<gene>
    <name type="primary">Esyt3</name>
    <name type="synonym">D9Ertd280e</name>
    <name type="synonym">Fam62c</name>
    <name type="synonym">Kiaa4186</name>
</gene>
<reference key="1">
    <citation type="submission" date="2005-02" db="EMBL/GenBank/DDBJ databases">
        <title>Prediction of the coding sequences of mouse homologues of KIAA gene. The complete nucleotide sequences of mouse KIAA-homologous cDNAs identified by screening of terminal sequences of cDNA clones randomly sampled from size-fractionated libraries.</title>
        <authorList>
            <person name="Okazaki N."/>
            <person name="Kikuno R.F."/>
            <person name="Ohara R."/>
            <person name="Inamoto S."/>
            <person name="Nagase T."/>
            <person name="Ohara O."/>
            <person name="Koga H."/>
        </authorList>
    </citation>
    <scope>NUCLEOTIDE SEQUENCE [LARGE SCALE MRNA] (ISOFORM 1)</scope>
    <source>
        <tissue>Fetal brain</tissue>
    </source>
</reference>
<reference key="2">
    <citation type="journal article" date="2005" name="Science">
        <title>The transcriptional landscape of the mammalian genome.</title>
        <authorList>
            <person name="Carninci P."/>
            <person name="Kasukawa T."/>
            <person name="Katayama S."/>
            <person name="Gough J."/>
            <person name="Frith M.C."/>
            <person name="Maeda N."/>
            <person name="Oyama R."/>
            <person name="Ravasi T."/>
            <person name="Lenhard B."/>
            <person name="Wells C."/>
            <person name="Kodzius R."/>
            <person name="Shimokawa K."/>
            <person name="Bajic V.B."/>
            <person name="Brenner S.E."/>
            <person name="Batalov S."/>
            <person name="Forrest A.R."/>
            <person name="Zavolan M."/>
            <person name="Davis M.J."/>
            <person name="Wilming L.G."/>
            <person name="Aidinis V."/>
            <person name="Allen J.E."/>
            <person name="Ambesi-Impiombato A."/>
            <person name="Apweiler R."/>
            <person name="Aturaliya R.N."/>
            <person name="Bailey T.L."/>
            <person name="Bansal M."/>
            <person name="Baxter L."/>
            <person name="Beisel K.W."/>
            <person name="Bersano T."/>
            <person name="Bono H."/>
            <person name="Chalk A.M."/>
            <person name="Chiu K.P."/>
            <person name="Choudhary V."/>
            <person name="Christoffels A."/>
            <person name="Clutterbuck D.R."/>
            <person name="Crowe M.L."/>
            <person name="Dalla E."/>
            <person name="Dalrymple B.P."/>
            <person name="de Bono B."/>
            <person name="Della Gatta G."/>
            <person name="di Bernardo D."/>
            <person name="Down T."/>
            <person name="Engstrom P."/>
            <person name="Fagiolini M."/>
            <person name="Faulkner G."/>
            <person name="Fletcher C.F."/>
            <person name="Fukushima T."/>
            <person name="Furuno M."/>
            <person name="Futaki S."/>
            <person name="Gariboldi M."/>
            <person name="Georgii-Hemming P."/>
            <person name="Gingeras T.R."/>
            <person name="Gojobori T."/>
            <person name="Green R.E."/>
            <person name="Gustincich S."/>
            <person name="Harbers M."/>
            <person name="Hayashi Y."/>
            <person name="Hensch T.K."/>
            <person name="Hirokawa N."/>
            <person name="Hill D."/>
            <person name="Huminiecki L."/>
            <person name="Iacono M."/>
            <person name="Ikeo K."/>
            <person name="Iwama A."/>
            <person name="Ishikawa T."/>
            <person name="Jakt M."/>
            <person name="Kanapin A."/>
            <person name="Katoh M."/>
            <person name="Kawasawa Y."/>
            <person name="Kelso J."/>
            <person name="Kitamura H."/>
            <person name="Kitano H."/>
            <person name="Kollias G."/>
            <person name="Krishnan S.P."/>
            <person name="Kruger A."/>
            <person name="Kummerfeld S.K."/>
            <person name="Kurochkin I.V."/>
            <person name="Lareau L.F."/>
            <person name="Lazarevic D."/>
            <person name="Lipovich L."/>
            <person name="Liu J."/>
            <person name="Liuni S."/>
            <person name="McWilliam S."/>
            <person name="Madan Babu M."/>
            <person name="Madera M."/>
            <person name="Marchionni L."/>
            <person name="Matsuda H."/>
            <person name="Matsuzawa S."/>
            <person name="Miki H."/>
            <person name="Mignone F."/>
            <person name="Miyake S."/>
            <person name="Morris K."/>
            <person name="Mottagui-Tabar S."/>
            <person name="Mulder N."/>
            <person name="Nakano N."/>
            <person name="Nakauchi H."/>
            <person name="Ng P."/>
            <person name="Nilsson R."/>
            <person name="Nishiguchi S."/>
            <person name="Nishikawa S."/>
            <person name="Nori F."/>
            <person name="Ohara O."/>
            <person name="Okazaki Y."/>
            <person name="Orlando V."/>
            <person name="Pang K.C."/>
            <person name="Pavan W.J."/>
            <person name="Pavesi G."/>
            <person name="Pesole G."/>
            <person name="Petrovsky N."/>
            <person name="Piazza S."/>
            <person name="Reed J."/>
            <person name="Reid J.F."/>
            <person name="Ring B.Z."/>
            <person name="Ringwald M."/>
            <person name="Rost B."/>
            <person name="Ruan Y."/>
            <person name="Salzberg S.L."/>
            <person name="Sandelin A."/>
            <person name="Schneider C."/>
            <person name="Schoenbach C."/>
            <person name="Sekiguchi K."/>
            <person name="Semple C.A."/>
            <person name="Seno S."/>
            <person name="Sessa L."/>
            <person name="Sheng Y."/>
            <person name="Shibata Y."/>
            <person name="Shimada H."/>
            <person name="Shimada K."/>
            <person name="Silva D."/>
            <person name="Sinclair B."/>
            <person name="Sperling S."/>
            <person name="Stupka E."/>
            <person name="Sugiura K."/>
            <person name="Sultana R."/>
            <person name="Takenaka Y."/>
            <person name="Taki K."/>
            <person name="Tammoja K."/>
            <person name="Tan S.L."/>
            <person name="Tang S."/>
            <person name="Taylor M.S."/>
            <person name="Tegner J."/>
            <person name="Teichmann S.A."/>
            <person name="Ueda H.R."/>
            <person name="van Nimwegen E."/>
            <person name="Verardo R."/>
            <person name="Wei C.L."/>
            <person name="Yagi K."/>
            <person name="Yamanishi H."/>
            <person name="Zabarovsky E."/>
            <person name="Zhu S."/>
            <person name="Zimmer A."/>
            <person name="Hide W."/>
            <person name="Bult C."/>
            <person name="Grimmond S.M."/>
            <person name="Teasdale R.D."/>
            <person name="Liu E.T."/>
            <person name="Brusic V."/>
            <person name="Quackenbush J."/>
            <person name="Wahlestedt C."/>
            <person name="Mattick J.S."/>
            <person name="Hume D.A."/>
            <person name="Kai C."/>
            <person name="Sasaki D."/>
            <person name="Tomaru Y."/>
            <person name="Fukuda S."/>
            <person name="Kanamori-Katayama M."/>
            <person name="Suzuki M."/>
            <person name="Aoki J."/>
            <person name="Arakawa T."/>
            <person name="Iida J."/>
            <person name="Imamura K."/>
            <person name="Itoh M."/>
            <person name="Kato T."/>
            <person name="Kawaji H."/>
            <person name="Kawagashira N."/>
            <person name="Kawashima T."/>
            <person name="Kojima M."/>
            <person name="Kondo S."/>
            <person name="Konno H."/>
            <person name="Nakano K."/>
            <person name="Ninomiya N."/>
            <person name="Nishio T."/>
            <person name="Okada M."/>
            <person name="Plessy C."/>
            <person name="Shibata K."/>
            <person name="Shiraki T."/>
            <person name="Suzuki S."/>
            <person name="Tagami M."/>
            <person name="Waki K."/>
            <person name="Watahiki A."/>
            <person name="Okamura-Oho Y."/>
            <person name="Suzuki H."/>
            <person name="Kawai J."/>
            <person name="Hayashizaki Y."/>
        </authorList>
    </citation>
    <scope>NUCLEOTIDE SEQUENCE [LARGE SCALE MRNA] (ISOFORM 1)</scope>
    <source>
        <strain>C57BL/6J</strain>
        <tissue>Head</tissue>
    </source>
</reference>
<reference key="3">
    <citation type="journal article" date="2004" name="Genome Res.">
        <title>The status, quality, and expansion of the NIH full-length cDNA project: the Mammalian Gene Collection (MGC).</title>
        <authorList>
            <consortium name="The MGC Project Team"/>
        </authorList>
    </citation>
    <scope>NUCLEOTIDE SEQUENCE [LARGE SCALE MRNA] (ISOFORM 2)</scope>
</reference>
<protein>
    <recommendedName>
        <fullName>Extended synaptotagmin-3</fullName>
        <shortName>E-Syt3</shortName>
    </recommendedName>
</protein>
<organism>
    <name type="scientific">Mus musculus</name>
    <name type="common">Mouse</name>
    <dbReference type="NCBI Taxonomy" id="10090"/>
    <lineage>
        <taxon>Eukaryota</taxon>
        <taxon>Metazoa</taxon>
        <taxon>Chordata</taxon>
        <taxon>Craniata</taxon>
        <taxon>Vertebrata</taxon>
        <taxon>Euteleostomi</taxon>
        <taxon>Mammalia</taxon>
        <taxon>Eutheria</taxon>
        <taxon>Euarchontoglires</taxon>
        <taxon>Glires</taxon>
        <taxon>Rodentia</taxon>
        <taxon>Myomorpha</taxon>
        <taxon>Muroidea</taxon>
        <taxon>Muridae</taxon>
        <taxon>Murinae</taxon>
        <taxon>Mus</taxon>
        <taxon>Mus</taxon>
    </lineage>
</organism>
<evidence type="ECO:0000250" key="1"/>
<evidence type="ECO:0000250" key="2">
    <source>
        <dbReference type="UniProtKB" id="A0FGR8"/>
    </source>
</evidence>
<evidence type="ECO:0000250" key="3">
    <source>
        <dbReference type="UniProtKB" id="A0FGR9"/>
    </source>
</evidence>
<evidence type="ECO:0000255" key="4"/>
<evidence type="ECO:0000255" key="5">
    <source>
        <dbReference type="PROSITE-ProRule" id="PRU00041"/>
    </source>
</evidence>
<evidence type="ECO:0000255" key="6">
    <source>
        <dbReference type="PROSITE-ProRule" id="PRU01194"/>
    </source>
</evidence>
<evidence type="ECO:0000256" key="7">
    <source>
        <dbReference type="SAM" id="MobiDB-lite"/>
    </source>
</evidence>
<evidence type="ECO:0000303" key="8">
    <source>
    </source>
</evidence>
<evidence type="ECO:0000305" key="9"/>
<accession>Q5DTI8</accession>
<accession>Q0VF61</accession>
<accession>Q8C3B9</accession>
<keyword id="KW-0025">Alternative splicing</keyword>
<keyword id="KW-0106">Calcium</keyword>
<keyword id="KW-1003">Cell membrane</keyword>
<keyword id="KW-0256">Endoplasmic reticulum</keyword>
<keyword id="KW-0445">Lipid transport</keyword>
<keyword id="KW-0446">Lipid-binding</keyword>
<keyword id="KW-0472">Membrane</keyword>
<keyword id="KW-0479">Metal-binding</keyword>
<keyword id="KW-1185">Reference proteome</keyword>
<keyword id="KW-0677">Repeat</keyword>
<keyword id="KW-0812">Transmembrane</keyword>
<keyword id="KW-1133">Transmembrane helix</keyword>
<keyword id="KW-0813">Transport</keyword>
<proteinExistence type="evidence at transcript level"/>
<name>ESYT3_MOUSE</name>
<feature type="chain" id="PRO_0000314900" description="Extended synaptotagmin-3">
    <location>
        <begin position="1"/>
        <end position="891"/>
    </location>
</feature>
<feature type="topological domain" description="Cytoplasmic" evidence="4">
    <location>
        <begin position="1"/>
        <end position="32"/>
    </location>
</feature>
<feature type="transmembrane region" description="Helical" evidence="4">
    <location>
        <begin position="33"/>
        <end position="53"/>
    </location>
</feature>
<feature type="topological domain" description="Lumenal" evidence="4">
    <location>
        <position position="54"/>
    </location>
</feature>
<feature type="transmembrane region" description="Helical" evidence="4">
    <location>
        <begin position="55"/>
        <end position="75"/>
    </location>
</feature>
<feature type="topological domain" description="Cytoplasmic" evidence="4">
    <location>
        <begin position="76"/>
        <end position="891"/>
    </location>
</feature>
<feature type="domain" description="SMP-LTD" evidence="6">
    <location>
        <begin position="118"/>
        <end position="295"/>
    </location>
</feature>
<feature type="domain" description="C2 1" evidence="5">
    <location>
        <begin position="292"/>
        <end position="412"/>
    </location>
</feature>
<feature type="domain" description="C2 2" evidence="5">
    <location>
        <begin position="430"/>
        <end position="570"/>
    </location>
</feature>
<feature type="domain" description="C2 3" evidence="5">
    <location>
        <begin position="759"/>
        <end position="881"/>
    </location>
</feature>
<feature type="region of interest" description="Disordered" evidence="7">
    <location>
        <begin position="1"/>
        <end position="30"/>
    </location>
</feature>
<feature type="region of interest" description="Disordered" evidence="7">
    <location>
        <begin position="652"/>
        <end position="711"/>
    </location>
</feature>
<feature type="region of interest" description="Required for phosphatidylinositol 4,5-bisphosphate-dependent location at the cell membrane" evidence="1">
    <location>
        <begin position="806"/>
        <end position="813"/>
    </location>
</feature>
<feature type="compositionally biased region" description="Basic and acidic residues" evidence="7">
    <location>
        <begin position="17"/>
        <end position="28"/>
    </location>
</feature>
<feature type="compositionally biased region" description="Pro residues" evidence="7">
    <location>
        <begin position="659"/>
        <end position="670"/>
    </location>
</feature>
<feature type="binding site" evidence="1">
    <location>
        <position position="325"/>
    </location>
    <ligand>
        <name>Ca(2+)</name>
        <dbReference type="ChEBI" id="CHEBI:29108"/>
        <label>1</label>
    </ligand>
</feature>
<feature type="binding site" evidence="1">
    <location>
        <position position="326"/>
    </location>
    <ligand>
        <name>Ca(2+)</name>
        <dbReference type="ChEBI" id="CHEBI:29108"/>
        <label>1</label>
    </ligand>
</feature>
<feature type="binding site" evidence="1">
    <location>
        <position position="326"/>
    </location>
    <ligand>
        <name>Ca(2+)</name>
        <dbReference type="ChEBI" id="CHEBI:29108"/>
        <label>2</label>
    </ligand>
</feature>
<feature type="binding site" evidence="1">
    <location>
        <position position="336"/>
    </location>
    <ligand>
        <name>Ca(2+)</name>
        <dbReference type="ChEBI" id="CHEBI:29108"/>
        <label>2</label>
    </ligand>
</feature>
<feature type="binding site" evidence="1">
    <location>
        <position position="383"/>
    </location>
    <ligand>
        <name>Ca(2+)</name>
        <dbReference type="ChEBI" id="CHEBI:29108"/>
        <label>1</label>
    </ligand>
</feature>
<feature type="binding site" evidence="1">
    <location>
        <position position="383"/>
    </location>
    <ligand>
        <name>Ca(2+)</name>
        <dbReference type="ChEBI" id="CHEBI:29108"/>
        <label>2</label>
    </ligand>
</feature>
<feature type="binding site" evidence="1">
    <location>
        <position position="384"/>
    </location>
    <ligand>
        <name>Ca(2+)</name>
        <dbReference type="ChEBI" id="CHEBI:29108"/>
        <label>2</label>
    </ligand>
</feature>
<feature type="binding site" evidence="1">
    <location>
        <position position="385"/>
    </location>
    <ligand>
        <name>Ca(2+)</name>
        <dbReference type="ChEBI" id="CHEBI:29108"/>
        <label>1</label>
    </ligand>
</feature>
<feature type="binding site" evidence="1">
    <location>
        <position position="385"/>
    </location>
    <ligand>
        <name>Ca(2+)</name>
        <dbReference type="ChEBI" id="CHEBI:29108"/>
        <label>2</label>
    </ligand>
</feature>
<feature type="binding site" evidence="1">
    <location>
        <position position="385"/>
    </location>
    <ligand>
        <name>Ca(2+)</name>
        <dbReference type="ChEBI" id="CHEBI:29108"/>
        <label>3</label>
    </ligand>
</feature>
<feature type="binding site" evidence="1">
    <location>
        <position position="387"/>
    </location>
    <ligand>
        <name>Ca(2+)</name>
        <dbReference type="ChEBI" id="CHEBI:29108"/>
        <label>3</label>
    </ligand>
</feature>
<feature type="binding site" evidence="1">
    <location>
        <position position="389"/>
    </location>
    <ligand>
        <name>Ca(2+)</name>
        <dbReference type="ChEBI" id="CHEBI:29108"/>
        <label>3</label>
    </ligand>
</feature>
<feature type="binding site" evidence="1">
    <location>
        <position position="390"/>
    </location>
    <ligand>
        <name>Ca(2+)</name>
        <dbReference type="ChEBI" id="CHEBI:29108"/>
        <label>1</label>
    </ligand>
</feature>
<feature type="splice variant" id="VSP_030426" description="In isoform 2." evidence="8">
    <location>
        <begin position="1"/>
        <end position="367"/>
    </location>
</feature>
<sequence>MQPEEPCAPSAPGGPDVPERGQRSRDPGPRLSGQLLPELYSFVARVLFYLAPVYLAGYLGLSVTWLLLGALLWMWWRRNRRGKLGRLEAAFEFLEHEREFISRELRGQHLPAWIHFPDVERVEWANKIIIQIWPYLSMIMENKIREKLEPKIREKSIHLRTFTFTKLYFGQKCPKVNGVKVHTDKRNRRKVTLDLQICYIGDCEISVELQKIRGGVSGVQLQGTLRVILEPLLVDKPFIGAVTVFFLQKPHLQINWTGLTNLLDMPGINELSDSLLEDLIAAHLVLPNRVTVPVKKGLDVTNLRVPLPCGVIRVHLLEAKKLAQKDNFLGLGGKSDPYAKVSIGLQHCRSRTIYKNLNPTWNEVFEFMVYEVPGQDLEVDLYDEDTDKDDFLGSLQICLGDVMKNRVVDEWFALNDTTSGRLHLRLEWLSLLTDQEALTENDSGLSTAILVVFLENACNLPRNPFDYLNGEYRAKKLSRFVKNKASRDPSSYVKLTVGKKTFTSKTCPHSKDPVWSQVFSFFVHSVAAEQLCLKVLDDELECALGVLEFPLCRILPCADLTLEQCFQLDHSGLDSLISMRLVLRFLRVEGRELGSPYTGPDALKKGPLFIKKVATNQGCKAPPLNEGLADVTSTSNPASYIKGASKSIDNISAATTDPEPMPEPQGPGPEPKGKDSARGLCESPGKKKNPATTFLTVPGLHSPGPIKSPRPMSRPAFPFAWPLTRVAPSMSSLNSLASSCFDLTDVSLNTEAGDSRQGRLGEIQLTVRYVCLRHCLRVLVNGCRNLTPCTSSGADPYVRIYLLPERRWASRKKTSVKQKTLEPLFDETFEFFVPMGEVQKRSLDVAVKNSRPLGSHRRKELGKVLIDLSKQDLIKGFSQWYELTADGQPRS</sequence>
<comment type="function">
    <text evidence="1">Tethers the endoplasmic reticulum to the cell membrane and promotes the formation of appositions between the endoplasmic reticulum and the cell membrane. Binds glycerophospholipids in a barrel-like domain and may play a role in cellular lipid transport (By similarity).</text>
</comment>
<comment type="subcellular location">
    <subcellularLocation>
        <location evidence="3">Cell membrane</location>
        <topology evidence="3">Peripheral membrane protein</topology>
    </subcellularLocation>
    <subcellularLocation>
        <location evidence="3">Endoplasmic reticulum membrane</location>
        <topology evidence="4">Multi-pass membrane protein</topology>
    </subcellularLocation>
    <text evidence="3">Localizes to endoplasmic reticulum-plasma membrane contact sites (EPCS). Recruited to the cell membrane via the third C2 domain (By similarity).</text>
</comment>
<comment type="alternative products">
    <event type="alternative splicing"/>
    <isoform>
        <id>Q5DTI8-1</id>
        <name>1</name>
        <sequence type="displayed"/>
    </isoform>
    <isoform>
        <id>Q5DTI8-2</id>
        <name>2</name>
        <sequence type="described" ref="VSP_030426"/>
    </isoform>
</comment>
<comment type="domain">
    <text evidence="2">The SMP-LTD domain is a barrel-like domain that binds glycerophospholipids in its interior (By similarity).</text>
</comment>
<comment type="similarity">
    <text evidence="9">Belongs to the extended synaptotagmin family.</text>
</comment>
<comment type="sequence caution" evidence="9">
    <conflict type="frameshift">
        <sequence resource="EMBL-CDS" id="BAC39655"/>
    </conflict>
</comment>
<comment type="sequence caution" evidence="9">
    <conflict type="erroneous initiation">
        <sequence resource="EMBL-CDS" id="BAD90311"/>
    </conflict>
</comment>